<comment type="function">
    <text evidence="1">Catalyzes the methylthiolation of an aspartic acid residue of ribosomal protein uS12.</text>
</comment>
<comment type="catalytic activity">
    <reaction evidence="1">
        <text>L-aspartate(89)-[ribosomal protein uS12]-hydrogen + (sulfur carrier)-SH + AH2 + 2 S-adenosyl-L-methionine = 3-methylsulfanyl-L-aspartate(89)-[ribosomal protein uS12]-hydrogen + (sulfur carrier)-H + 5'-deoxyadenosine + L-methionine + A + S-adenosyl-L-homocysteine + 2 H(+)</text>
        <dbReference type="Rhea" id="RHEA:37087"/>
        <dbReference type="Rhea" id="RHEA-COMP:10460"/>
        <dbReference type="Rhea" id="RHEA-COMP:10461"/>
        <dbReference type="Rhea" id="RHEA-COMP:14737"/>
        <dbReference type="Rhea" id="RHEA-COMP:14739"/>
        <dbReference type="ChEBI" id="CHEBI:13193"/>
        <dbReference type="ChEBI" id="CHEBI:15378"/>
        <dbReference type="ChEBI" id="CHEBI:17319"/>
        <dbReference type="ChEBI" id="CHEBI:17499"/>
        <dbReference type="ChEBI" id="CHEBI:29917"/>
        <dbReference type="ChEBI" id="CHEBI:29961"/>
        <dbReference type="ChEBI" id="CHEBI:57844"/>
        <dbReference type="ChEBI" id="CHEBI:57856"/>
        <dbReference type="ChEBI" id="CHEBI:59789"/>
        <dbReference type="ChEBI" id="CHEBI:64428"/>
        <dbReference type="ChEBI" id="CHEBI:73599"/>
        <dbReference type="EC" id="2.8.4.4"/>
    </reaction>
</comment>
<comment type="cofactor">
    <cofactor evidence="1">
        <name>[4Fe-4S] cluster</name>
        <dbReference type="ChEBI" id="CHEBI:49883"/>
    </cofactor>
    <text evidence="1">Binds 2 [4Fe-4S] clusters. One cluster is coordinated with 3 cysteines and an exchangeable S-adenosyl-L-methionine.</text>
</comment>
<comment type="subcellular location">
    <subcellularLocation>
        <location evidence="1">Cytoplasm</location>
    </subcellularLocation>
</comment>
<comment type="similarity">
    <text evidence="1">Belongs to the methylthiotransferase family. RimO subfamily.</text>
</comment>
<evidence type="ECO:0000255" key="1">
    <source>
        <dbReference type="HAMAP-Rule" id="MF_01865"/>
    </source>
</evidence>
<evidence type="ECO:0000255" key="2">
    <source>
        <dbReference type="PROSITE-ProRule" id="PRU01266"/>
    </source>
</evidence>
<keyword id="KW-0004">4Fe-4S</keyword>
<keyword id="KW-0963">Cytoplasm</keyword>
<keyword id="KW-0408">Iron</keyword>
<keyword id="KW-0411">Iron-sulfur</keyword>
<keyword id="KW-0479">Metal-binding</keyword>
<keyword id="KW-1185">Reference proteome</keyword>
<keyword id="KW-0949">S-adenosyl-L-methionine</keyword>
<keyword id="KW-0808">Transferase</keyword>
<accession>A7NIS8</accession>
<dbReference type="EC" id="2.8.4.4" evidence="1"/>
<dbReference type="EMBL" id="CP000804">
    <property type="protein sequence ID" value="ABU57381.1"/>
    <property type="molecule type" value="Genomic_DNA"/>
</dbReference>
<dbReference type="SMR" id="A7NIS8"/>
<dbReference type="STRING" id="383372.Rcas_1284"/>
<dbReference type="KEGG" id="rca:Rcas_1284"/>
<dbReference type="eggNOG" id="COG0621">
    <property type="taxonomic scope" value="Bacteria"/>
</dbReference>
<dbReference type="HOGENOM" id="CLU_018697_0_1_0"/>
<dbReference type="Proteomes" id="UP000000263">
    <property type="component" value="Chromosome"/>
</dbReference>
<dbReference type="GO" id="GO:0005829">
    <property type="term" value="C:cytosol"/>
    <property type="evidence" value="ECO:0007669"/>
    <property type="project" value="TreeGrafter"/>
</dbReference>
<dbReference type="GO" id="GO:0051539">
    <property type="term" value="F:4 iron, 4 sulfur cluster binding"/>
    <property type="evidence" value="ECO:0007669"/>
    <property type="project" value="UniProtKB-UniRule"/>
</dbReference>
<dbReference type="GO" id="GO:0035599">
    <property type="term" value="F:aspartic acid methylthiotransferase activity"/>
    <property type="evidence" value="ECO:0007669"/>
    <property type="project" value="TreeGrafter"/>
</dbReference>
<dbReference type="GO" id="GO:0046872">
    <property type="term" value="F:metal ion binding"/>
    <property type="evidence" value="ECO:0007669"/>
    <property type="project" value="UniProtKB-KW"/>
</dbReference>
<dbReference type="GO" id="GO:0103039">
    <property type="term" value="F:protein methylthiotransferase activity"/>
    <property type="evidence" value="ECO:0007669"/>
    <property type="project" value="UniProtKB-EC"/>
</dbReference>
<dbReference type="GO" id="GO:0006400">
    <property type="term" value="P:tRNA modification"/>
    <property type="evidence" value="ECO:0007669"/>
    <property type="project" value="InterPro"/>
</dbReference>
<dbReference type="CDD" id="cd01335">
    <property type="entry name" value="Radical_SAM"/>
    <property type="match status" value="1"/>
</dbReference>
<dbReference type="FunFam" id="3.80.30.20:FF:000001">
    <property type="entry name" value="tRNA-2-methylthio-N(6)-dimethylallyladenosine synthase 2"/>
    <property type="match status" value="1"/>
</dbReference>
<dbReference type="Gene3D" id="3.40.50.12160">
    <property type="entry name" value="Methylthiotransferase, N-terminal domain"/>
    <property type="match status" value="1"/>
</dbReference>
<dbReference type="Gene3D" id="2.40.50.140">
    <property type="entry name" value="Nucleic acid-binding proteins"/>
    <property type="match status" value="1"/>
</dbReference>
<dbReference type="Gene3D" id="3.80.30.20">
    <property type="entry name" value="tm_1862 like domain"/>
    <property type="match status" value="1"/>
</dbReference>
<dbReference type="HAMAP" id="MF_01865">
    <property type="entry name" value="MTTase_RimO"/>
    <property type="match status" value="1"/>
</dbReference>
<dbReference type="InterPro" id="IPR006638">
    <property type="entry name" value="Elp3/MiaA/NifB-like_rSAM"/>
</dbReference>
<dbReference type="InterPro" id="IPR005839">
    <property type="entry name" value="Methylthiotransferase"/>
</dbReference>
<dbReference type="InterPro" id="IPR020612">
    <property type="entry name" value="Methylthiotransferase_CS"/>
</dbReference>
<dbReference type="InterPro" id="IPR013848">
    <property type="entry name" value="Methylthiotransferase_N"/>
</dbReference>
<dbReference type="InterPro" id="IPR038135">
    <property type="entry name" value="Methylthiotransferase_N_sf"/>
</dbReference>
<dbReference type="InterPro" id="IPR000385">
    <property type="entry name" value="MoaA_NifB_PqqE_Fe-S-bd_CS"/>
</dbReference>
<dbReference type="InterPro" id="IPR012340">
    <property type="entry name" value="NA-bd_OB-fold"/>
</dbReference>
<dbReference type="InterPro" id="IPR005840">
    <property type="entry name" value="Ribosomal_uS12_MeSTrfase_RimO"/>
</dbReference>
<dbReference type="InterPro" id="IPR007197">
    <property type="entry name" value="rSAM"/>
</dbReference>
<dbReference type="InterPro" id="IPR023404">
    <property type="entry name" value="rSAM_horseshoe"/>
</dbReference>
<dbReference type="InterPro" id="IPR002792">
    <property type="entry name" value="TRAM_dom"/>
</dbReference>
<dbReference type="NCBIfam" id="TIGR01125">
    <property type="entry name" value="30S ribosomal protein S12 methylthiotransferase RimO"/>
    <property type="match status" value="1"/>
</dbReference>
<dbReference type="NCBIfam" id="TIGR00089">
    <property type="entry name" value="MiaB/RimO family radical SAM methylthiotransferase"/>
    <property type="match status" value="1"/>
</dbReference>
<dbReference type="PANTHER" id="PTHR43837">
    <property type="entry name" value="RIBOSOMAL PROTEIN S12 METHYLTHIOTRANSFERASE RIMO"/>
    <property type="match status" value="1"/>
</dbReference>
<dbReference type="PANTHER" id="PTHR43837:SF1">
    <property type="entry name" value="RIBOSOMAL PROTEIN US12 METHYLTHIOTRANSFERASE RIMO"/>
    <property type="match status" value="1"/>
</dbReference>
<dbReference type="Pfam" id="PF04055">
    <property type="entry name" value="Radical_SAM"/>
    <property type="match status" value="1"/>
</dbReference>
<dbReference type="Pfam" id="PF18693">
    <property type="entry name" value="TRAM_2"/>
    <property type="match status" value="1"/>
</dbReference>
<dbReference type="Pfam" id="PF00919">
    <property type="entry name" value="UPF0004"/>
    <property type="match status" value="1"/>
</dbReference>
<dbReference type="SFLD" id="SFLDG01082">
    <property type="entry name" value="B12-binding_domain_containing"/>
    <property type="match status" value="1"/>
</dbReference>
<dbReference type="SFLD" id="SFLDS00029">
    <property type="entry name" value="Radical_SAM"/>
    <property type="match status" value="1"/>
</dbReference>
<dbReference type="SFLD" id="SFLDF00274">
    <property type="entry name" value="ribosomal_protein_S12_methylth"/>
    <property type="match status" value="1"/>
</dbReference>
<dbReference type="SMART" id="SM00729">
    <property type="entry name" value="Elp3"/>
    <property type="match status" value="1"/>
</dbReference>
<dbReference type="SUPFAM" id="SSF102114">
    <property type="entry name" value="Radical SAM enzymes"/>
    <property type="match status" value="1"/>
</dbReference>
<dbReference type="PROSITE" id="PS51449">
    <property type="entry name" value="MTTASE_N"/>
    <property type="match status" value="1"/>
</dbReference>
<dbReference type="PROSITE" id="PS01278">
    <property type="entry name" value="MTTASE_RADICAL"/>
    <property type="match status" value="1"/>
</dbReference>
<dbReference type="PROSITE" id="PS51918">
    <property type="entry name" value="RADICAL_SAM"/>
    <property type="match status" value="1"/>
</dbReference>
<dbReference type="PROSITE" id="PS50926">
    <property type="entry name" value="TRAM"/>
    <property type="match status" value="1"/>
</dbReference>
<feature type="chain" id="PRO_0000374978" description="Ribosomal protein uS12 methylthiotransferase RimO">
    <location>
        <begin position="1"/>
        <end position="482"/>
    </location>
</feature>
<feature type="domain" description="MTTase N-terminal" evidence="1">
    <location>
        <begin position="2"/>
        <end position="115"/>
    </location>
</feature>
<feature type="domain" description="Radical SAM core" evidence="2">
    <location>
        <begin position="163"/>
        <end position="394"/>
    </location>
</feature>
<feature type="domain" description="TRAM" evidence="1">
    <location>
        <begin position="397"/>
        <end position="466"/>
    </location>
</feature>
<feature type="binding site" evidence="1">
    <location>
        <position position="11"/>
    </location>
    <ligand>
        <name>[4Fe-4S] cluster</name>
        <dbReference type="ChEBI" id="CHEBI:49883"/>
        <label>1</label>
    </ligand>
</feature>
<feature type="binding site" evidence="1">
    <location>
        <position position="47"/>
    </location>
    <ligand>
        <name>[4Fe-4S] cluster</name>
        <dbReference type="ChEBI" id="CHEBI:49883"/>
        <label>1</label>
    </ligand>
</feature>
<feature type="binding site" evidence="1">
    <location>
        <position position="79"/>
    </location>
    <ligand>
        <name>[4Fe-4S] cluster</name>
        <dbReference type="ChEBI" id="CHEBI:49883"/>
        <label>1</label>
    </ligand>
</feature>
<feature type="binding site" evidence="1">
    <location>
        <position position="177"/>
    </location>
    <ligand>
        <name>[4Fe-4S] cluster</name>
        <dbReference type="ChEBI" id="CHEBI:49883"/>
        <label>2</label>
        <note>4Fe-4S-S-AdoMet</note>
    </ligand>
</feature>
<feature type="binding site" evidence="1">
    <location>
        <position position="181"/>
    </location>
    <ligand>
        <name>[4Fe-4S] cluster</name>
        <dbReference type="ChEBI" id="CHEBI:49883"/>
        <label>2</label>
        <note>4Fe-4S-S-AdoMet</note>
    </ligand>
</feature>
<feature type="binding site" evidence="1">
    <location>
        <position position="184"/>
    </location>
    <ligand>
        <name>[4Fe-4S] cluster</name>
        <dbReference type="ChEBI" id="CHEBI:49883"/>
        <label>2</label>
        <note>4Fe-4S-S-AdoMet</note>
    </ligand>
</feature>
<organism>
    <name type="scientific">Roseiflexus castenholzii (strain DSM 13941 / HLO8)</name>
    <dbReference type="NCBI Taxonomy" id="383372"/>
    <lineage>
        <taxon>Bacteria</taxon>
        <taxon>Bacillati</taxon>
        <taxon>Chloroflexota</taxon>
        <taxon>Chloroflexia</taxon>
        <taxon>Chloroflexales</taxon>
        <taxon>Roseiflexineae</taxon>
        <taxon>Roseiflexaceae</taxon>
        <taxon>Roseiflexus</taxon>
    </lineage>
</organism>
<protein>
    <recommendedName>
        <fullName evidence="1">Ribosomal protein uS12 methylthiotransferase RimO</fullName>
        <shortName evidence="1">uS12 MTTase</shortName>
        <shortName evidence="1">uS12 methylthiotransferase</shortName>
        <ecNumber evidence="1">2.8.4.4</ecNumber>
    </recommendedName>
    <alternativeName>
        <fullName evidence="1">Ribosomal protein uS12 (aspartate-C(3))-methylthiotransferase</fullName>
    </alternativeName>
    <alternativeName>
        <fullName evidence="1">Ribosome maturation factor RimO</fullName>
    </alternativeName>
</protein>
<reference key="1">
    <citation type="submission" date="2007-08" db="EMBL/GenBank/DDBJ databases">
        <title>Complete sequence of Roseiflexus castenholzii DSM 13941.</title>
        <authorList>
            <consortium name="US DOE Joint Genome Institute"/>
            <person name="Copeland A."/>
            <person name="Lucas S."/>
            <person name="Lapidus A."/>
            <person name="Barry K."/>
            <person name="Glavina del Rio T."/>
            <person name="Dalin E."/>
            <person name="Tice H."/>
            <person name="Pitluck S."/>
            <person name="Thompson L.S."/>
            <person name="Brettin T."/>
            <person name="Bruce D."/>
            <person name="Detter J.C."/>
            <person name="Han C."/>
            <person name="Tapia R."/>
            <person name="Schmutz J."/>
            <person name="Larimer F."/>
            <person name="Land M."/>
            <person name="Hauser L."/>
            <person name="Kyrpides N."/>
            <person name="Mikhailova N."/>
            <person name="Bryant D.A."/>
            <person name="Hanada S."/>
            <person name="Tsukatani Y."/>
            <person name="Richardson P."/>
        </authorList>
    </citation>
    <scope>NUCLEOTIDE SEQUENCE [LARGE SCALE GENOMIC DNA]</scope>
    <source>
        <strain>DSM 13941 / HLO8</strain>
    </source>
</reference>
<proteinExistence type="inferred from homology"/>
<name>RIMO_ROSCS</name>
<gene>
    <name evidence="1" type="primary">rimO</name>
    <name type="ordered locus">Rcas_1284</name>
</gene>
<sequence>MMKVHIITLGCPKNQVDSEGMSGILAAQGHTLAASADDADVVIVNTCSFIAAAREETLAVLRDVAACKTPEQRLVAAGCMAESHRAIVAATPGVDATLGTREWTRIAEVVETFQPAATMAPLNAASAREIIPLTSAGVPSPAPHDLSVPGAYADWRTAPIRRRAVGPSAYLKISDGCNLRCAFCTIPSFKGDMRSKAIGAILGEAQELAAAGVKEIVLVAQHLTDYGRDLGLKDGLAILLDEICAVLPENVWVRLMYAYPHGIGERLIATMARHPQICHYLDMPLQHAHPETLRRMRRPPDTDRTRRLIDDLRAAIPDIAIRSTFIVGFPGETNTEFRALLAFLEDVQFDRVGVFRYSREPGTPAAALPDQLAPRIIERRWHEIMRLQQRISRERNRRWLGRVVRVLVEGQGQTDDGRMLSVGRSFRDAPEVDGQVLFWGAATPGTFVDVRVTQALDYDLWGDVVGVLDGEERIVKCIQSVG</sequence>